<evidence type="ECO:0000250" key="1"/>
<evidence type="ECO:0000255" key="2">
    <source>
        <dbReference type="HAMAP-Rule" id="MF_00742"/>
    </source>
</evidence>
<reference key="1">
    <citation type="journal article" date="2005" name="Nucleic Acids Res.">
        <title>Genome dynamics and diversity of Shigella species, the etiologic agents of bacillary dysentery.</title>
        <authorList>
            <person name="Yang F."/>
            <person name="Yang J."/>
            <person name="Zhang X."/>
            <person name="Chen L."/>
            <person name="Jiang Y."/>
            <person name="Yan Y."/>
            <person name="Tang X."/>
            <person name="Wang J."/>
            <person name="Xiong Z."/>
            <person name="Dong J."/>
            <person name="Xue Y."/>
            <person name="Zhu Y."/>
            <person name="Xu X."/>
            <person name="Sun L."/>
            <person name="Chen S."/>
            <person name="Nie H."/>
            <person name="Peng J."/>
            <person name="Xu J."/>
            <person name="Wang Y."/>
            <person name="Yuan Z."/>
            <person name="Wen Y."/>
            <person name="Yao Z."/>
            <person name="Shen Y."/>
            <person name="Qiang B."/>
            <person name="Hou Y."/>
            <person name="Yu J."/>
            <person name="Jin Q."/>
        </authorList>
    </citation>
    <scope>NUCLEOTIDE SEQUENCE [LARGE SCALE GENOMIC DNA]</scope>
    <source>
        <strain>Ss046</strain>
    </source>
</reference>
<proteinExistence type="inferred from homology"/>
<accession>Q3YZF6</accession>
<keyword id="KW-1185">Reference proteome</keyword>
<keyword id="KW-0808">Transferase</keyword>
<name>FCTA_SHISS</name>
<gene>
    <name evidence="2" type="primary">frc</name>
    <name type="ordered locus">SSON_2465</name>
</gene>
<protein>
    <recommendedName>
        <fullName>Formyl-CoA:oxalate CoA-transferase</fullName>
        <shortName>FCOCT</shortName>
        <ecNumber evidence="2">2.8.3.16</ecNumber>
    </recommendedName>
    <alternativeName>
        <fullName evidence="2">Formyl-coenzyme A transferase</fullName>
        <shortName evidence="2">Formyl-CoA transferase</shortName>
    </alternativeName>
</protein>
<comment type="function">
    <text evidence="1">Involved in the catabolism of oxalate and in the adapatation to low pH via the induction of the oxalate-dependent acid tolerance response (ATR). Catalyzes the transfer of the CoA moiety from formyl-CoA to oxalate (By similarity).</text>
</comment>
<comment type="catalytic activity">
    <reaction evidence="2">
        <text>formyl-CoA + oxalate = oxalyl-CoA + formate</text>
        <dbReference type="Rhea" id="RHEA:16545"/>
        <dbReference type="ChEBI" id="CHEBI:15740"/>
        <dbReference type="ChEBI" id="CHEBI:30623"/>
        <dbReference type="ChEBI" id="CHEBI:57376"/>
        <dbReference type="ChEBI" id="CHEBI:57388"/>
        <dbReference type="EC" id="2.8.3.16"/>
    </reaction>
</comment>
<comment type="pathway">
    <text evidence="2">Metabolic intermediate degradation; oxalate degradation; CO(2) and formate from oxalate: step 1/2.</text>
</comment>
<comment type="subunit">
    <text evidence="2">Homodimer.</text>
</comment>
<comment type="similarity">
    <text evidence="2">Belongs to the CoA-transferase III family. Frc subfamily.</text>
</comment>
<feature type="chain" id="PRO_0000300997" description="Formyl-CoA:oxalate CoA-transferase">
    <location>
        <begin position="1"/>
        <end position="416"/>
    </location>
</feature>
<feature type="active site" description="Nucleophile" evidence="2">
    <location>
        <position position="169"/>
    </location>
</feature>
<feature type="binding site" evidence="1">
    <location>
        <begin position="17"/>
        <end position="18"/>
    </location>
    <ligand>
        <name>CoA</name>
        <dbReference type="ChEBI" id="CHEBI:57287"/>
    </ligand>
</feature>
<feature type="binding site" evidence="2">
    <location>
        <position position="38"/>
    </location>
    <ligand>
        <name>CoA</name>
        <dbReference type="ChEBI" id="CHEBI:57287"/>
    </ligand>
</feature>
<feature type="binding site" evidence="1">
    <location>
        <begin position="72"/>
        <end position="75"/>
    </location>
    <ligand>
        <name>CoA</name>
        <dbReference type="ChEBI" id="CHEBI:57287"/>
    </ligand>
</feature>
<feature type="binding site" evidence="1">
    <location>
        <begin position="96"/>
        <end position="98"/>
    </location>
    <ligand>
        <name>CoA</name>
        <dbReference type="ChEBI" id="CHEBI:57287"/>
    </ligand>
</feature>
<feature type="binding site" evidence="2">
    <location>
        <position position="104"/>
    </location>
    <ligand>
        <name>CoA</name>
        <dbReference type="ChEBI" id="CHEBI:57287"/>
    </ligand>
</feature>
<feature type="binding site" evidence="1">
    <location>
        <begin position="137"/>
        <end position="140"/>
    </location>
    <ligand>
        <name>CoA</name>
        <dbReference type="ChEBI" id="CHEBI:57287"/>
    </ligand>
</feature>
<feature type="binding site" evidence="1">
    <location>
        <begin position="248"/>
        <end position="250"/>
    </location>
    <ligand>
        <name>substrate</name>
    </ligand>
</feature>
<feature type="binding site" evidence="1">
    <location>
        <begin position="273"/>
        <end position="275"/>
    </location>
    <ligand>
        <name>CoA</name>
        <dbReference type="ChEBI" id="CHEBI:57287"/>
    </ligand>
</feature>
<sequence length="416" mass="45818">MSTPLQGIKVLDFTGVQSGPSCTQMLAWFGADVIKIERPGVGDVTRHQLRDIPDIDALYFTMLNSNKRSIELNTKTAEGKEVMEKLIREADILVENFHPGAIDHMGFTWEHIQEINPRLIFGSIKGFDECSPYVNVKAYENVAQAAGGAASTTGFWDGPPLVSAAALGDSNTGMHLLIGLLAALLHREKTGRGQRVTMSMQDAVLNLCRVKLRDQQRLDKLGYLEEYPQYPNGTFGDAVPRGGNAGGGGQPGWILKCKGWETDPNAYIYFTIQEQNWENTCKAIGKPEWITDSAYSTAHARQPHIFDIFAEIEKYTVTIDKHEAVAYLTQFDIPCAPVLSMKEISLDPSLRQSGSVVEVEQPLRGKYLTVGCPMKFSAFTPDIKAAPLLGEHTAAVLQELGYSDDEIAAMKQNHAI</sequence>
<dbReference type="EC" id="2.8.3.16" evidence="2"/>
<dbReference type="EMBL" id="CP000038">
    <property type="protein sequence ID" value="AAZ89106.1"/>
    <property type="molecule type" value="Genomic_DNA"/>
</dbReference>
<dbReference type="RefSeq" id="WP_000106764.1">
    <property type="nucleotide sequence ID" value="NC_007384.1"/>
</dbReference>
<dbReference type="SMR" id="Q3YZF6"/>
<dbReference type="GeneID" id="93774755"/>
<dbReference type="KEGG" id="ssn:SSON_2465"/>
<dbReference type="HOGENOM" id="CLU_033975_2_1_6"/>
<dbReference type="UniPathway" id="UPA00540">
    <property type="reaction ID" value="UER00598"/>
</dbReference>
<dbReference type="Proteomes" id="UP000002529">
    <property type="component" value="Chromosome"/>
</dbReference>
<dbReference type="GO" id="GO:0033608">
    <property type="term" value="F:formyl-CoA transferase activity"/>
    <property type="evidence" value="ECO:0007669"/>
    <property type="project" value="UniProtKB-EC"/>
</dbReference>
<dbReference type="GO" id="GO:0033611">
    <property type="term" value="P:oxalate catabolic process"/>
    <property type="evidence" value="ECO:0007669"/>
    <property type="project" value="UniProtKB-UniRule"/>
</dbReference>
<dbReference type="Gene3D" id="3.40.50.10540">
    <property type="entry name" value="Crotonobetainyl-coa:carnitine coa-transferase, domain 1"/>
    <property type="match status" value="1"/>
</dbReference>
<dbReference type="Gene3D" id="3.30.1540.10">
    <property type="entry name" value="formyl-coa transferase, domain 3"/>
    <property type="match status" value="1"/>
</dbReference>
<dbReference type="HAMAP" id="MF_00742">
    <property type="entry name" value="Formyl_CoA_transfer"/>
    <property type="match status" value="1"/>
</dbReference>
<dbReference type="InterPro" id="IPR050483">
    <property type="entry name" value="CoA-transferase_III_domain"/>
</dbReference>
<dbReference type="InterPro" id="IPR003673">
    <property type="entry name" value="CoA-Trfase_fam_III"/>
</dbReference>
<dbReference type="InterPro" id="IPR044855">
    <property type="entry name" value="CoA-Trfase_III_dom3_sf"/>
</dbReference>
<dbReference type="InterPro" id="IPR023606">
    <property type="entry name" value="CoA-Trfase_III_dom_1_sf"/>
</dbReference>
<dbReference type="InterPro" id="IPR017659">
    <property type="entry name" value="Formyl_CoA_transfer"/>
</dbReference>
<dbReference type="NCBIfam" id="TIGR03253">
    <property type="entry name" value="oxalate_frc"/>
    <property type="match status" value="1"/>
</dbReference>
<dbReference type="NCBIfam" id="NF003809">
    <property type="entry name" value="PRK05398.1"/>
    <property type="match status" value="1"/>
</dbReference>
<dbReference type="PANTHER" id="PTHR48207">
    <property type="entry name" value="SUCCINATE--HYDROXYMETHYLGLUTARATE COA-TRANSFERASE"/>
    <property type="match status" value="1"/>
</dbReference>
<dbReference type="PANTHER" id="PTHR48207:SF3">
    <property type="entry name" value="SUCCINATE--HYDROXYMETHYLGLUTARATE COA-TRANSFERASE"/>
    <property type="match status" value="1"/>
</dbReference>
<dbReference type="Pfam" id="PF02515">
    <property type="entry name" value="CoA_transf_3"/>
    <property type="match status" value="1"/>
</dbReference>
<dbReference type="SUPFAM" id="SSF89796">
    <property type="entry name" value="CoA-transferase family III (CaiB/BaiF)"/>
    <property type="match status" value="1"/>
</dbReference>
<organism>
    <name type="scientific">Shigella sonnei (strain Ss046)</name>
    <dbReference type="NCBI Taxonomy" id="300269"/>
    <lineage>
        <taxon>Bacteria</taxon>
        <taxon>Pseudomonadati</taxon>
        <taxon>Pseudomonadota</taxon>
        <taxon>Gammaproteobacteria</taxon>
        <taxon>Enterobacterales</taxon>
        <taxon>Enterobacteriaceae</taxon>
        <taxon>Shigella</taxon>
    </lineage>
</organism>